<protein>
    <recommendedName>
        <fullName>Probable thiol:disulfide interchange protein DsbC</fullName>
    </recommendedName>
</protein>
<proteinExistence type="inferred from homology"/>
<sequence>MSGPPFSGAGMNFRITVWCAAAAVWSSGALAQDGAGQAAPGTPDKVYSTTGTAPAKPGDKVYSTRSAQAPDPQADAVKERFAQRFEGFDVTAVRRTPYGLFEVQIGTDLLYTDEKVTWVMEGPLIDALTRRDVTRERQEKLSSVPFDELPLDLAVKQVKGDGSRVMAVFEDPNCGYCKQLHRTLEDMDNITVYTFLYPILSPDSTTKVRDIWCASDPAKVWKDWMVRGQRPPTAECDAPVEQWLALGRQLMVRGTPAIFFKSGGRVSGALPRDELEARL</sequence>
<name>DSBC_BORPA</name>
<gene>
    <name type="primary">dsbC</name>
    <name type="ordered locus">BPP4150</name>
</gene>
<dbReference type="EMBL" id="BX640435">
    <property type="protein sequence ID" value="CAE39429.1"/>
    <property type="molecule type" value="Genomic_DNA"/>
</dbReference>
<dbReference type="RefSeq" id="WP_003815375.1">
    <property type="nucleotide sequence ID" value="NC_002928.3"/>
</dbReference>
<dbReference type="SMR" id="Q7W396"/>
<dbReference type="GeneID" id="93205946"/>
<dbReference type="KEGG" id="bpa:BPP4150"/>
<dbReference type="HOGENOM" id="CLU_083593_1_0_4"/>
<dbReference type="Proteomes" id="UP000001421">
    <property type="component" value="Chromosome"/>
</dbReference>
<dbReference type="GO" id="GO:0042597">
    <property type="term" value="C:periplasmic space"/>
    <property type="evidence" value="ECO:0007669"/>
    <property type="project" value="UniProtKB-SubCell"/>
</dbReference>
<dbReference type="CDD" id="cd03020">
    <property type="entry name" value="DsbA_DsbC_DsbG"/>
    <property type="match status" value="1"/>
</dbReference>
<dbReference type="Gene3D" id="3.10.450.70">
    <property type="entry name" value="Disulphide bond isomerase, DsbC/G, N-terminal"/>
    <property type="match status" value="1"/>
</dbReference>
<dbReference type="Gene3D" id="3.40.30.10">
    <property type="entry name" value="Glutaredoxin"/>
    <property type="match status" value="1"/>
</dbReference>
<dbReference type="InterPro" id="IPR033954">
    <property type="entry name" value="DiS-bond_Isoase_DsbC/G"/>
</dbReference>
<dbReference type="InterPro" id="IPR018950">
    <property type="entry name" value="DiS-bond_isomerase_DsbC/G_N"/>
</dbReference>
<dbReference type="InterPro" id="IPR009094">
    <property type="entry name" value="DiS-bond_isomerase_DsbC/G_N_sf"/>
</dbReference>
<dbReference type="InterPro" id="IPR051470">
    <property type="entry name" value="Thiol:disulfide_interchange"/>
</dbReference>
<dbReference type="InterPro" id="IPR012336">
    <property type="entry name" value="Thioredoxin-like_fold"/>
</dbReference>
<dbReference type="InterPro" id="IPR036249">
    <property type="entry name" value="Thioredoxin-like_sf"/>
</dbReference>
<dbReference type="InterPro" id="IPR017937">
    <property type="entry name" value="Thioredoxin_CS"/>
</dbReference>
<dbReference type="PANTHER" id="PTHR35272:SF3">
    <property type="entry name" value="THIOL:DISULFIDE INTERCHANGE PROTEIN DSBC"/>
    <property type="match status" value="1"/>
</dbReference>
<dbReference type="PANTHER" id="PTHR35272">
    <property type="entry name" value="THIOL:DISULFIDE INTERCHANGE PROTEIN DSBC-RELATED"/>
    <property type="match status" value="1"/>
</dbReference>
<dbReference type="Pfam" id="PF10411">
    <property type="entry name" value="DsbC_N"/>
    <property type="match status" value="1"/>
</dbReference>
<dbReference type="Pfam" id="PF13098">
    <property type="entry name" value="Thioredoxin_2"/>
    <property type="match status" value="1"/>
</dbReference>
<dbReference type="SUPFAM" id="SSF52833">
    <property type="entry name" value="Thioredoxin-like"/>
    <property type="match status" value="1"/>
</dbReference>
<dbReference type="PROSITE" id="PS00194">
    <property type="entry name" value="THIOREDOXIN_1"/>
    <property type="match status" value="1"/>
</dbReference>
<accession>Q7W396</accession>
<comment type="function">
    <text evidence="1">Required for disulfide bond formation in some periplasmic proteins. Acts by transferring its disulfide bond to other proteins and is reduced in the process (By similarity).</text>
</comment>
<comment type="subcellular location">
    <subcellularLocation>
        <location evidence="1">Periplasm</location>
    </subcellularLocation>
</comment>
<comment type="similarity">
    <text evidence="4">Belongs to the thioredoxin family. DsbC subfamily.</text>
</comment>
<keyword id="KW-1015">Disulfide bond</keyword>
<keyword id="KW-0574">Periplasm</keyword>
<keyword id="KW-0676">Redox-active center</keyword>
<keyword id="KW-0732">Signal</keyword>
<evidence type="ECO:0000250" key="1"/>
<evidence type="ECO:0000255" key="2"/>
<evidence type="ECO:0000256" key="3">
    <source>
        <dbReference type="SAM" id="MobiDB-lite"/>
    </source>
</evidence>
<evidence type="ECO:0000305" key="4"/>
<reference key="1">
    <citation type="journal article" date="2003" name="Nat. Genet.">
        <title>Comparative analysis of the genome sequences of Bordetella pertussis, Bordetella parapertussis and Bordetella bronchiseptica.</title>
        <authorList>
            <person name="Parkhill J."/>
            <person name="Sebaihia M."/>
            <person name="Preston A."/>
            <person name="Murphy L.D."/>
            <person name="Thomson N.R."/>
            <person name="Harris D.E."/>
            <person name="Holden M.T.G."/>
            <person name="Churcher C.M."/>
            <person name="Bentley S.D."/>
            <person name="Mungall K.L."/>
            <person name="Cerdeno-Tarraga A.-M."/>
            <person name="Temple L."/>
            <person name="James K.D."/>
            <person name="Harris B."/>
            <person name="Quail M.A."/>
            <person name="Achtman M."/>
            <person name="Atkin R."/>
            <person name="Baker S."/>
            <person name="Basham D."/>
            <person name="Bason N."/>
            <person name="Cherevach I."/>
            <person name="Chillingworth T."/>
            <person name="Collins M."/>
            <person name="Cronin A."/>
            <person name="Davis P."/>
            <person name="Doggett J."/>
            <person name="Feltwell T."/>
            <person name="Goble A."/>
            <person name="Hamlin N."/>
            <person name="Hauser H."/>
            <person name="Holroyd S."/>
            <person name="Jagels K."/>
            <person name="Leather S."/>
            <person name="Moule S."/>
            <person name="Norberczak H."/>
            <person name="O'Neil S."/>
            <person name="Ormond D."/>
            <person name="Price C."/>
            <person name="Rabbinowitsch E."/>
            <person name="Rutter S."/>
            <person name="Sanders M."/>
            <person name="Saunders D."/>
            <person name="Seeger K."/>
            <person name="Sharp S."/>
            <person name="Simmonds M."/>
            <person name="Skelton J."/>
            <person name="Squares R."/>
            <person name="Squares S."/>
            <person name="Stevens K."/>
            <person name="Unwin L."/>
            <person name="Whitehead S."/>
            <person name="Barrell B.G."/>
            <person name="Maskell D.J."/>
        </authorList>
    </citation>
    <scope>NUCLEOTIDE SEQUENCE [LARGE SCALE GENOMIC DNA]</scope>
    <source>
        <strain>12822 / ATCC BAA-587 / NCTC 13253</strain>
    </source>
</reference>
<organism>
    <name type="scientific">Bordetella parapertussis (strain 12822 / ATCC BAA-587 / NCTC 13253)</name>
    <dbReference type="NCBI Taxonomy" id="257311"/>
    <lineage>
        <taxon>Bacteria</taxon>
        <taxon>Pseudomonadati</taxon>
        <taxon>Pseudomonadota</taxon>
        <taxon>Betaproteobacteria</taxon>
        <taxon>Burkholderiales</taxon>
        <taxon>Alcaligenaceae</taxon>
        <taxon>Bordetella</taxon>
    </lineage>
</organism>
<feature type="signal peptide" evidence="2">
    <location>
        <begin position="1"/>
        <end position="31"/>
    </location>
</feature>
<feature type="chain" id="PRO_0000245644" description="Probable thiol:disulfide interchange protein DsbC">
    <location>
        <begin position="32"/>
        <end position="279"/>
    </location>
</feature>
<feature type="region of interest" description="Disordered" evidence="3">
    <location>
        <begin position="33"/>
        <end position="74"/>
    </location>
</feature>
<feature type="compositionally biased region" description="Low complexity" evidence="3">
    <location>
        <begin position="33"/>
        <end position="44"/>
    </location>
</feature>
<feature type="disulfide bond" description="Redox-active" evidence="1">
    <location>
        <begin position="174"/>
        <end position="177"/>
    </location>
</feature>
<feature type="disulfide bond" evidence="1">
    <location>
        <begin position="213"/>
        <end position="236"/>
    </location>
</feature>